<sequence length="188" mass="20025">MNGVFLAIGALLPICLAGGALLGYAAVRFRVQGDPVAEQVNALLPQTQCGQCGYPGCKPYAEAIAAGDKINKCPPGGEATIRALADLLDLEPEPLDAAEETPPRVAYIREAECIGCTKCIQACPVDAIVGAARLMHTVIADECTGCDLCLEPCPVDCIEMREIPDDVRHWKWPQPSPRLIASDRERAA</sequence>
<proteinExistence type="inferred from homology"/>
<protein>
    <recommendedName>
        <fullName evidence="1">Ion-translocating oxidoreductase complex subunit B</fullName>
        <ecNumber evidence="1">7.-.-.-</ecNumber>
    </recommendedName>
    <alternativeName>
        <fullName evidence="1">Rnf electron transport complex subunit B</fullName>
    </alternativeName>
</protein>
<evidence type="ECO:0000255" key="1">
    <source>
        <dbReference type="HAMAP-Rule" id="MF_00463"/>
    </source>
</evidence>
<keyword id="KW-0004">4Fe-4S</keyword>
<keyword id="KW-0997">Cell inner membrane</keyword>
<keyword id="KW-1003">Cell membrane</keyword>
<keyword id="KW-0249">Electron transport</keyword>
<keyword id="KW-0408">Iron</keyword>
<keyword id="KW-0411">Iron-sulfur</keyword>
<keyword id="KW-0472">Membrane</keyword>
<keyword id="KW-0479">Metal-binding</keyword>
<keyword id="KW-1185">Reference proteome</keyword>
<keyword id="KW-0677">Repeat</keyword>
<keyword id="KW-1278">Translocase</keyword>
<keyword id="KW-0813">Transport</keyword>
<dbReference type="EC" id="7.-.-.-" evidence="1"/>
<dbReference type="EMBL" id="AE004091">
    <property type="protein sequence ID" value="AAG06878.1"/>
    <property type="molecule type" value="Genomic_DNA"/>
</dbReference>
<dbReference type="PIR" id="C83208">
    <property type="entry name" value="C83208"/>
</dbReference>
<dbReference type="RefSeq" id="NP_252180.1">
    <property type="nucleotide sequence ID" value="NC_002516.2"/>
</dbReference>
<dbReference type="SMR" id="Q9HYB9"/>
<dbReference type="FunCoup" id="Q9HYB9">
    <property type="interactions" value="87"/>
</dbReference>
<dbReference type="STRING" id="208964.PA3490"/>
<dbReference type="PaxDb" id="208964-PA3490"/>
<dbReference type="DNASU" id="879986"/>
<dbReference type="GeneID" id="879986"/>
<dbReference type="KEGG" id="pae:PA3490"/>
<dbReference type="PATRIC" id="fig|208964.12.peg.3654"/>
<dbReference type="PseudoCAP" id="PA3490"/>
<dbReference type="HOGENOM" id="CLU_063448_2_0_6"/>
<dbReference type="InParanoid" id="Q9HYB9"/>
<dbReference type="OrthoDB" id="9789936at2"/>
<dbReference type="PhylomeDB" id="Q9HYB9"/>
<dbReference type="BioCyc" id="PAER208964:G1FZ6-3558-MONOMER"/>
<dbReference type="Proteomes" id="UP000002438">
    <property type="component" value="Chromosome"/>
</dbReference>
<dbReference type="GO" id="GO:0005886">
    <property type="term" value="C:plasma membrane"/>
    <property type="evidence" value="ECO:0007669"/>
    <property type="project" value="UniProtKB-SubCell"/>
</dbReference>
<dbReference type="GO" id="GO:0051539">
    <property type="term" value="F:4 iron, 4 sulfur cluster binding"/>
    <property type="evidence" value="ECO:0007669"/>
    <property type="project" value="UniProtKB-UniRule"/>
</dbReference>
<dbReference type="GO" id="GO:0009055">
    <property type="term" value="F:electron transfer activity"/>
    <property type="evidence" value="ECO:0007669"/>
    <property type="project" value="InterPro"/>
</dbReference>
<dbReference type="GO" id="GO:0046872">
    <property type="term" value="F:metal ion binding"/>
    <property type="evidence" value="ECO:0007669"/>
    <property type="project" value="UniProtKB-KW"/>
</dbReference>
<dbReference type="GO" id="GO:0022900">
    <property type="term" value="P:electron transport chain"/>
    <property type="evidence" value="ECO:0007669"/>
    <property type="project" value="UniProtKB-UniRule"/>
</dbReference>
<dbReference type="FunFam" id="1.10.15.40:FF:000001">
    <property type="entry name" value="Ion-translocating oxidoreductase complex subunit B"/>
    <property type="match status" value="1"/>
</dbReference>
<dbReference type="Gene3D" id="3.30.70.20">
    <property type="match status" value="1"/>
</dbReference>
<dbReference type="Gene3D" id="1.10.15.40">
    <property type="entry name" value="Electron transport complex subunit B, putative Fe-S cluster"/>
    <property type="match status" value="1"/>
</dbReference>
<dbReference type="HAMAP" id="MF_00463">
    <property type="entry name" value="RsxB_RnfB"/>
    <property type="match status" value="1"/>
</dbReference>
<dbReference type="InterPro" id="IPR007202">
    <property type="entry name" value="4Fe-4S_dom"/>
</dbReference>
<dbReference type="InterPro" id="IPR017896">
    <property type="entry name" value="4Fe4S_Fe-S-bd"/>
</dbReference>
<dbReference type="InterPro" id="IPR017900">
    <property type="entry name" value="4Fe4S_Fe_S_CS"/>
</dbReference>
<dbReference type="InterPro" id="IPR010207">
    <property type="entry name" value="Elect_transpt_cplx_RnfB/RsxB"/>
</dbReference>
<dbReference type="InterPro" id="IPR016463">
    <property type="entry name" value="RnfB/RsxB_Proteobac"/>
</dbReference>
<dbReference type="InterPro" id="IPR050294">
    <property type="entry name" value="RnfB_subfamily"/>
</dbReference>
<dbReference type="NCBIfam" id="NF003475">
    <property type="entry name" value="PRK05113.1"/>
    <property type="match status" value="1"/>
</dbReference>
<dbReference type="NCBIfam" id="TIGR01944">
    <property type="entry name" value="rnfB"/>
    <property type="match status" value="1"/>
</dbReference>
<dbReference type="PANTHER" id="PTHR42859:SF3">
    <property type="entry name" value="ION-TRANSLOCATING OXIDOREDUCTASE COMPLEX SUBUNIT B"/>
    <property type="match status" value="1"/>
</dbReference>
<dbReference type="PANTHER" id="PTHR42859">
    <property type="entry name" value="OXIDOREDUCTASE"/>
    <property type="match status" value="1"/>
</dbReference>
<dbReference type="Pfam" id="PF14697">
    <property type="entry name" value="Fer4_21"/>
    <property type="match status" value="1"/>
</dbReference>
<dbReference type="Pfam" id="PF04060">
    <property type="entry name" value="FeS"/>
    <property type="match status" value="1"/>
</dbReference>
<dbReference type="PIRSF" id="PIRSF005784">
    <property type="entry name" value="Elect_transpt_RnfB"/>
    <property type="match status" value="1"/>
</dbReference>
<dbReference type="SUPFAM" id="SSF54862">
    <property type="entry name" value="4Fe-4S ferredoxins"/>
    <property type="match status" value="1"/>
</dbReference>
<dbReference type="PROSITE" id="PS51656">
    <property type="entry name" value="4FE4S"/>
    <property type="match status" value="1"/>
</dbReference>
<dbReference type="PROSITE" id="PS00198">
    <property type="entry name" value="4FE4S_FER_1"/>
    <property type="match status" value="2"/>
</dbReference>
<dbReference type="PROSITE" id="PS51379">
    <property type="entry name" value="4FE4S_FER_2"/>
    <property type="match status" value="2"/>
</dbReference>
<organism>
    <name type="scientific">Pseudomonas aeruginosa (strain ATCC 15692 / DSM 22644 / CIP 104116 / JCM 14847 / LMG 12228 / 1C / PRS 101 / PAO1)</name>
    <dbReference type="NCBI Taxonomy" id="208964"/>
    <lineage>
        <taxon>Bacteria</taxon>
        <taxon>Pseudomonadati</taxon>
        <taxon>Pseudomonadota</taxon>
        <taxon>Gammaproteobacteria</taxon>
        <taxon>Pseudomonadales</taxon>
        <taxon>Pseudomonadaceae</taxon>
        <taxon>Pseudomonas</taxon>
    </lineage>
</organism>
<accession>Q9HYB9</accession>
<name>RNFB_PSEAE</name>
<comment type="function">
    <text evidence="1">Part of a membrane-bound complex that couples electron transfer with translocation of ions across the membrane.</text>
</comment>
<comment type="cofactor">
    <cofactor evidence="1">
        <name>[4Fe-4S] cluster</name>
        <dbReference type="ChEBI" id="CHEBI:49883"/>
    </cofactor>
    <text evidence="1">Binds 3 [4Fe-4S] clusters.</text>
</comment>
<comment type="subunit">
    <text evidence="1">The complex is composed of six subunits: RnfA, RnfB, RnfC, RnfD, RnfE and RnfG.</text>
</comment>
<comment type="subcellular location">
    <subcellularLocation>
        <location evidence="1">Cell inner membrane</location>
    </subcellularLocation>
</comment>
<comment type="similarity">
    <text evidence="1">Belongs to the 4Fe4S bacterial-type ferredoxin family. RnfB subfamily.</text>
</comment>
<feature type="chain" id="PRO_0000216276" description="Ion-translocating oxidoreductase complex subunit B">
    <location>
        <begin position="1"/>
        <end position="188"/>
    </location>
</feature>
<feature type="domain" description="4Fe-4S" evidence="1">
    <location>
        <begin position="32"/>
        <end position="90"/>
    </location>
</feature>
<feature type="domain" description="4Fe-4S ferredoxin-type 1" evidence="1">
    <location>
        <begin position="104"/>
        <end position="133"/>
    </location>
</feature>
<feature type="domain" description="4Fe-4S ferredoxin-type 2" evidence="1">
    <location>
        <begin position="134"/>
        <end position="163"/>
    </location>
</feature>
<feature type="region of interest" description="Hydrophobic" evidence="1">
    <location>
        <begin position="1"/>
        <end position="26"/>
    </location>
</feature>
<feature type="binding site" evidence="1">
    <location>
        <position position="49"/>
    </location>
    <ligand>
        <name>[4Fe-4S] cluster</name>
        <dbReference type="ChEBI" id="CHEBI:49883"/>
        <label>1</label>
    </ligand>
</feature>
<feature type="binding site" evidence="1">
    <location>
        <position position="52"/>
    </location>
    <ligand>
        <name>[4Fe-4S] cluster</name>
        <dbReference type="ChEBI" id="CHEBI:49883"/>
        <label>1</label>
    </ligand>
</feature>
<feature type="binding site" evidence="1">
    <location>
        <position position="57"/>
    </location>
    <ligand>
        <name>[4Fe-4S] cluster</name>
        <dbReference type="ChEBI" id="CHEBI:49883"/>
        <label>1</label>
    </ligand>
</feature>
<feature type="binding site" evidence="1">
    <location>
        <position position="73"/>
    </location>
    <ligand>
        <name>[4Fe-4S] cluster</name>
        <dbReference type="ChEBI" id="CHEBI:49883"/>
        <label>1</label>
    </ligand>
</feature>
<feature type="binding site" evidence="1">
    <location>
        <position position="113"/>
    </location>
    <ligand>
        <name>[4Fe-4S] cluster</name>
        <dbReference type="ChEBI" id="CHEBI:49883"/>
        <label>2</label>
    </ligand>
</feature>
<feature type="binding site" evidence="1">
    <location>
        <position position="116"/>
    </location>
    <ligand>
        <name>[4Fe-4S] cluster</name>
        <dbReference type="ChEBI" id="CHEBI:49883"/>
        <label>2</label>
    </ligand>
</feature>
<feature type="binding site" evidence="1">
    <location>
        <position position="119"/>
    </location>
    <ligand>
        <name>[4Fe-4S] cluster</name>
        <dbReference type="ChEBI" id="CHEBI:49883"/>
        <label>2</label>
    </ligand>
</feature>
<feature type="binding site" evidence="1">
    <location>
        <position position="123"/>
    </location>
    <ligand>
        <name>[4Fe-4S] cluster</name>
        <dbReference type="ChEBI" id="CHEBI:49883"/>
        <label>3</label>
    </ligand>
</feature>
<feature type="binding site" evidence="1">
    <location>
        <position position="143"/>
    </location>
    <ligand>
        <name>[4Fe-4S] cluster</name>
        <dbReference type="ChEBI" id="CHEBI:49883"/>
        <label>3</label>
    </ligand>
</feature>
<feature type="binding site" evidence="1">
    <location>
        <position position="146"/>
    </location>
    <ligand>
        <name>[4Fe-4S] cluster</name>
        <dbReference type="ChEBI" id="CHEBI:49883"/>
        <label>3</label>
    </ligand>
</feature>
<feature type="binding site" evidence="1">
    <location>
        <position position="149"/>
    </location>
    <ligand>
        <name>[4Fe-4S] cluster</name>
        <dbReference type="ChEBI" id="CHEBI:49883"/>
        <label>3</label>
    </ligand>
</feature>
<feature type="binding site" evidence="1">
    <location>
        <position position="153"/>
    </location>
    <ligand>
        <name>[4Fe-4S] cluster</name>
        <dbReference type="ChEBI" id="CHEBI:49883"/>
        <label>2</label>
    </ligand>
</feature>
<reference key="1">
    <citation type="journal article" date="2000" name="Nature">
        <title>Complete genome sequence of Pseudomonas aeruginosa PAO1, an opportunistic pathogen.</title>
        <authorList>
            <person name="Stover C.K."/>
            <person name="Pham X.-Q.T."/>
            <person name="Erwin A.L."/>
            <person name="Mizoguchi S.D."/>
            <person name="Warrener P."/>
            <person name="Hickey M.J."/>
            <person name="Brinkman F.S.L."/>
            <person name="Hufnagle W.O."/>
            <person name="Kowalik D.J."/>
            <person name="Lagrou M."/>
            <person name="Garber R.L."/>
            <person name="Goltry L."/>
            <person name="Tolentino E."/>
            <person name="Westbrock-Wadman S."/>
            <person name="Yuan Y."/>
            <person name="Brody L.L."/>
            <person name="Coulter S.N."/>
            <person name="Folger K.R."/>
            <person name="Kas A."/>
            <person name="Larbig K."/>
            <person name="Lim R.M."/>
            <person name="Smith K.A."/>
            <person name="Spencer D.H."/>
            <person name="Wong G.K.-S."/>
            <person name="Wu Z."/>
            <person name="Paulsen I.T."/>
            <person name="Reizer J."/>
            <person name="Saier M.H. Jr."/>
            <person name="Hancock R.E.W."/>
            <person name="Lory S."/>
            <person name="Olson M.V."/>
        </authorList>
    </citation>
    <scope>NUCLEOTIDE SEQUENCE [LARGE SCALE GENOMIC DNA]</scope>
    <source>
        <strain>ATCC 15692 / DSM 22644 / CIP 104116 / JCM 14847 / LMG 12228 / 1C / PRS 101 / PAO1</strain>
    </source>
</reference>
<gene>
    <name evidence="1" type="primary">rnfB</name>
    <name type="ordered locus">PA3490</name>
</gene>